<dbReference type="EMBL" id="CU329671">
    <property type="protein sequence ID" value="CAA18862.1"/>
    <property type="molecule type" value="Genomic_DNA"/>
</dbReference>
<dbReference type="PIR" id="T39928">
    <property type="entry name" value="T39928"/>
</dbReference>
<dbReference type="RefSeq" id="NP_595927.1">
    <property type="nucleotide sequence ID" value="NM_001021835.2"/>
</dbReference>
<dbReference type="SMR" id="O60171"/>
<dbReference type="BioGRID" id="277140">
    <property type="interactions" value="9"/>
</dbReference>
<dbReference type="FunCoup" id="O60171">
    <property type="interactions" value="266"/>
</dbReference>
<dbReference type="IntAct" id="O60171">
    <property type="interactions" value="2"/>
</dbReference>
<dbReference type="MINT" id="O60171"/>
<dbReference type="STRING" id="284812.O60171"/>
<dbReference type="iPTMnet" id="O60171"/>
<dbReference type="PaxDb" id="4896-SPBC21H7.02.1"/>
<dbReference type="EnsemblFungi" id="SPBC21H7.02.1">
    <property type="protein sequence ID" value="SPBC21H7.02.1:pep"/>
    <property type="gene ID" value="SPBC21H7.02"/>
</dbReference>
<dbReference type="GeneID" id="2540614"/>
<dbReference type="KEGG" id="spo:2540614"/>
<dbReference type="PomBase" id="SPBC21H7.02">
    <property type="gene designation" value="taf10"/>
</dbReference>
<dbReference type="VEuPathDB" id="FungiDB:SPBC21H7.02"/>
<dbReference type="eggNOG" id="KOG3423">
    <property type="taxonomic scope" value="Eukaryota"/>
</dbReference>
<dbReference type="HOGENOM" id="CLU_064104_0_0_1"/>
<dbReference type="InParanoid" id="O60171"/>
<dbReference type="OMA" id="DAYQYSK"/>
<dbReference type="PhylomeDB" id="O60171"/>
<dbReference type="Reactome" id="R-SPO-5689880">
    <property type="pathway name" value="Ub-specific processing proteases"/>
</dbReference>
<dbReference type="Reactome" id="R-SPO-674695">
    <property type="pathway name" value="RNA Polymerase II Pre-transcription Events"/>
</dbReference>
<dbReference type="Reactome" id="R-SPO-73776">
    <property type="pathway name" value="RNA Polymerase II Promoter Escape"/>
</dbReference>
<dbReference type="Reactome" id="R-SPO-73779">
    <property type="pathway name" value="RNA Polymerase II Transcription Pre-Initiation And Promoter Opening"/>
</dbReference>
<dbReference type="Reactome" id="R-SPO-75953">
    <property type="pathway name" value="RNA Polymerase II Transcription Initiation"/>
</dbReference>
<dbReference type="Reactome" id="R-SPO-76042">
    <property type="pathway name" value="RNA Polymerase II Transcription Initiation And Promoter Clearance"/>
</dbReference>
<dbReference type="PRO" id="PR:O60171"/>
<dbReference type="Proteomes" id="UP000002485">
    <property type="component" value="Chromosome II"/>
</dbReference>
<dbReference type="GO" id="GO:0005829">
    <property type="term" value="C:cytosol"/>
    <property type="evidence" value="ECO:0007005"/>
    <property type="project" value="PomBase"/>
</dbReference>
<dbReference type="GO" id="GO:0005634">
    <property type="term" value="C:nucleus"/>
    <property type="evidence" value="ECO:0007005"/>
    <property type="project" value="PomBase"/>
</dbReference>
<dbReference type="GO" id="GO:0000124">
    <property type="term" value="C:SAGA complex"/>
    <property type="evidence" value="ECO:0000314"/>
    <property type="project" value="PomBase"/>
</dbReference>
<dbReference type="GO" id="GO:0005669">
    <property type="term" value="C:transcription factor TFIID complex"/>
    <property type="evidence" value="ECO:0000314"/>
    <property type="project" value="PomBase"/>
</dbReference>
<dbReference type="GO" id="GO:1990841">
    <property type="term" value="F:promoter-specific chromatin binding"/>
    <property type="evidence" value="ECO:0000318"/>
    <property type="project" value="GO_Central"/>
</dbReference>
<dbReference type="GO" id="GO:0016251">
    <property type="term" value="F:RNA polymerase II general transcription initiation factor activity"/>
    <property type="evidence" value="ECO:0000269"/>
    <property type="project" value="PomBase"/>
</dbReference>
<dbReference type="GO" id="GO:0045893">
    <property type="term" value="P:positive regulation of DNA-templated transcription"/>
    <property type="evidence" value="ECO:0007669"/>
    <property type="project" value="GOC"/>
</dbReference>
<dbReference type="GO" id="GO:0006367">
    <property type="term" value="P:transcription initiation at RNA polymerase II promoter"/>
    <property type="evidence" value="ECO:0000269"/>
    <property type="project" value="PomBase"/>
</dbReference>
<dbReference type="GO" id="GO:0045815">
    <property type="term" value="P:transcription initiation-coupled chromatin remodeling"/>
    <property type="evidence" value="ECO:0000305"/>
    <property type="project" value="PomBase"/>
</dbReference>
<dbReference type="CDD" id="cd07982">
    <property type="entry name" value="HFD_TAF10"/>
    <property type="match status" value="1"/>
</dbReference>
<dbReference type="InterPro" id="IPR003923">
    <property type="entry name" value="TAF10"/>
</dbReference>
<dbReference type="PANTHER" id="PTHR21242">
    <property type="entry name" value="TRANSCRIPTION INITIATION FACTOR TFIID SUBUNIT 10"/>
    <property type="match status" value="1"/>
</dbReference>
<dbReference type="PANTHER" id="PTHR21242:SF0">
    <property type="entry name" value="TRANSCRIPTION INITIATION FACTOR TFIID SUBUNIT 10"/>
    <property type="match status" value="1"/>
</dbReference>
<dbReference type="Pfam" id="PF03540">
    <property type="entry name" value="TAF10"/>
    <property type="match status" value="1"/>
</dbReference>
<dbReference type="PIRSF" id="PIRSF017246">
    <property type="entry name" value="TFIID_TAF10"/>
    <property type="match status" value="1"/>
</dbReference>
<dbReference type="PRINTS" id="PR01443">
    <property type="entry name" value="TFIID30KDSUB"/>
</dbReference>
<keyword id="KW-0539">Nucleus</keyword>
<keyword id="KW-1185">Reference proteome</keyword>
<keyword id="KW-0804">Transcription</keyword>
<keyword id="KW-0805">Transcription regulation</keyword>
<evidence type="ECO:0000250" key="1">
    <source>
        <dbReference type="UniProtKB" id="Q12030"/>
    </source>
</evidence>
<evidence type="ECO:0000255" key="2"/>
<evidence type="ECO:0000256" key="3">
    <source>
        <dbReference type="SAM" id="MobiDB-lite"/>
    </source>
</evidence>
<evidence type="ECO:0000269" key="4">
    <source>
    </source>
</evidence>
<evidence type="ECO:0000269" key="5">
    <source>
    </source>
</evidence>
<evidence type="ECO:0000269" key="6">
    <source>
    </source>
</evidence>
<evidence type="ECO:0000305" key="7"/>
<evidence type="ECO:0000312" key="8">
    <source>
        <dbReference type="EMBL" id="CAA18862.1"/>
    </source>
</evidence>
<feature type="chain" id="PRO_0000326090" description="SAGA complex/transcription factor TFIID complex subunit Taf10">
    <location>
        <begin position="1"/>
        <end position="215"/>
    </location>
</feature>
<feature type="domain" description="Histone-fold" evidence="1">
    <location>
        <begin position="58"/>
        <end position="203"/>
    </location>
</feature>
<feature type="region of interest" description="Disordered" evidence="3">
    <location>
        <begin position="1"/>
        <end position="77"/>
    </location>
</feature>
<feature type="compositionally biased region" description="Polar residues" evidence="3">
    <location>
        <begin position="23"/>
        <end position="42"/>
    </location>
</feature>
<feature type="compositionally biased region" description="Basic and acidic residues" evidence="3">
    <location>
        <begin position="58"/>
        <end position="73"/>
    </location>
</feature>
<reference evidence="8" key="1">
    <citation type="journal article" date="2002" name="Nature">
        <title>The genome sequence of Schizosaccharomyces pombe.</title>
        <authorList>
            <person name="Wood V."/>
            <person name="Gwilliam R."/>
            <person name="Rajandream M.A."/>
            <person name="Lyne M.H."/>
            <person name="Lyne R."/>
            <person name="Stewart A."/>
            <person name="Sgouros J.G."/>
            <person name="Peat N."/>
            <person name="Hayles J."/>
            <person name="Baker S.G."/>
            <person name="Basham D."/>
            <person name="Bowman S."/>
            <person name="Brooks K."/>
            <person name="Brown D."/>
            <person name="Brown S."/>
            <person name="Chillingworth T."/>
            <person name="Churcher C.M."/>
            <person name="Collins M."/>
            <person name="Connor R."/>
            <person name="Cronin A."/>
            <person name="Davis P."/>
            <person name="Feltwell T."/>
            <person name="Fraser A."/>
            <person name="Gentles S."/>
            <person name="Goble A."/>
            <person name="Hamlin N."/>
            <person name="Harris D.E."/>
            <person name="Hidalgo J."/>
            <person name="Hodgson G."/>
            <person name="Holroyd S."/>
            <person name="Hornsby T."/>
            <person name="Howarth S."/>
            <person name="Huckle E.J."/>
            <person name="Hunt S."/>
            <person name="Jagels K."/>
            <person name="James K.D."/>
            <person name="Jones L."/>
            <person name="Jones M."/>
            <person name="Leather S."/>
            <person name="McDonald S."/>
            <person name="McLean J."/>
            <person name="Mooney P."/>
            <person name="Moule S."/>
            <person name="Mungall K.L."/>
            <person name="Murphy L.D."/>
            <person name="Niblett D."/>
            <person name="Odell C."/>
            <person name="Oliver K."/>
            <person name="O'Neil S."/>
            <person name="Pearson D."/>
            <person name="Quail M.A."/>
            <person name="Rabbinowitsch E."/>
            <person name="Rutherford K.M."/>
            <person name="Rutter S."/>
            <person name="Saunders D."/>
            <person name="Seeger K."/>
            <person name="Sharp S."/>
            <person name="Skelton J."/>
            <person name="Simmonds M.N."/>
            <person name="Squares R."/>
            <person name="Squares S."/>
            <person name="Stevens K."/>
            <person name="Taylor K."/>
            <person name="Taylor R.G."/>
            <person name="Tivey A."/>
            <person name="Walsh S.V."/>
            <person name="Warren T."/>
            <person name="Whitehead S."/>
            <person name="Woodward J.R."/>
            <person name="Volckaert G."/>
            <person name="Aert R."/>
            <person name="Robben J."/>
            <person name="Grymonprez B."/>
            <person name="Weltjens I."/>
            <person name="Vanstreels E."/>
            <person name="Rieger M."/>
            <person name="Schaefer M."/>
            <person name="Mueller-Auer S."/>
            <person name="Gabel C."/>
            <person name="Fuchs M."/>
            <person name="Duesterhoeft A."/>
            <person name="Fritzc C."/>
            <person name="Holzer E."/>
            <person name="Moestl D."/>
            <person name="Hilbert H."/>
            <person name="Borzym K."/>
            <person name="Langer I."/>
            <person name="Beck A."/>
            <person name="Lehrach H."/>
            <person name="Reinhardt R."/>
            <person name="Pohl T.M."/>
            <person name="Eger P."/>
            <person name="Zimmermann W."/>
            <person name="Wedler H."/>
            <person name="Wambutt R."/>
            <person name="Purnelle B."/>
            <person name="Goffeau A."/>
            <person name="Cadieu E."/>
            <person name="Dreano S."/>
            <person name="Gloux S."/>
            <person name="Lelaure V."/>
            <person name="Mottier S."/>
            <person name="Galibert F."/>
            <person name="Aves S.J."/>
            <person name="Xiang Z."/>
            <person name="Hunt C."/>
            <person name="Moore K."/>
            <person name="Hurst S.M."/>
            <person name="Lucas M."/>
            <person name="Rochet M."/>
            <person name="Gaillardin C."/>
            <person name="Tallada V.A."/>
            <person name="Garzon A."/>
            <person name="Thode G."/>
            <person name="Daga R.R."/>
            <person name="Cruzado L."/>
            <person name="Jimenez J."/>
            <person name="Sanchez M."/>
            <person name="del Rey F."/>
            <person name="Benito J."/>
            <person name="Dominguez A."/>
            <person name="Revuelta J.L."/>
            <person name="Moreno S."/>
            <person name="Armstrong J."/>
            <person name="Forsburg S.L."/>
            <person name="Cerutti L."/>
            <person name="Lowe T."/>
            <person name="McCombie W.R."/>
            <person name="Paulsen I."/>
            <person name="Potashkin J."/>
            <person name="Shpakovski G.V."/>
            <person name="Ussery D."/>
            <person name="Barrell B.G."/>
            <person name="Nurse P."/>
        </authorList>
    </citation>
    <scope>NUCLEOTIDE SEQUENCE [LARGE SCALE GENOMIC DNA]</scope>
    <source>
        <strain>972 / ATCC 24843</strain>
    </source>
</reference>
<reference evidence="7" key="2">
    <citation type="journal article" date="2006" name="Nat. Biotechnol.">
        <title>ORFeome cloning and global analysis of protein localization in the fission yeast Schizosaccharomyces pombe.</title>
        <authorList>
            <person name="Matsuyama A."/>
            <person name="Arai R."/>
            <person name="Yashiroda Y."/>
            <person name="Shirai A."/>
            <person name="Kamata A."/>
            <person name="Sekido S."/>
            <person name="Kobayashi Y."/>
            <person name="Hashimoto A."/>
            <person name="Hamamoto M."/>
            <person name="Hiraoka Y."/>
            <person name="Horinouchi S."/>
            <person name="Yoshida M."/>
        </authorList>
    </citation>
    <scope>SUBCELLULAR LOCATION [LARGE SCALE ANALYSIS]</scope>
</reference>
<reference key="3">
    <citation type="journal article" date="2008" name="Genes Dev.">
        <title>The S. pombe SAGA complex controls the switch from proliferation to sexual differentiation through the opposing roles of its subunits Gcn5 and Spt8.</title>
        <authorList>
            <person name="Helmlinger D."/>
            <person name="Marguerat S."/>
            <person name="Villen J."/>
            <person name="Gygi S.P."/>
            <person name="Bahler J."/>
            <person name="Winston F."/>
        </authorList>
    </citation>
    <scope>IDENTIFICATION IN THE SAGA COMPLEX</scope>
    <scope>IDENTIFICATION BY MASS SPECTROMETRY</scope>
</reference>
<reference key="4">
    <citation type="journal article" date="2009" name="Structure">
        <title>Cryo-EM reveals promoter DNA binding and conformational flexibility of the general transcription factor TFIID.</title>
        <authorList>
            <person name="Elmlund H."/>
            <person name="Baraznenok V."/>
            <person name="Linder T."/>
            <person name="Szilagyi Z."/>
            <person name="Rofougaran R."/>
            <person name="Hofer A."/>
            <person name="Hebert H."/>
            <person name="Lindahl M."/>
            <person name="Gustafsson C.M."/>
        </authorList>
    </citation>
    <scope>STRUCTURE BY ELECTRON MICROSCOPY OF TFIID</scope>
</reference>
<sequence length="215" mass="23526">MSDINNNEPAENIEQPKQEPEDGNNSMSVDEQPETSSTNLPTGDNLAPMSVESPAHLNNEDSPKSDDSRERHGSNYVIEPHLELRDMAKDKTLENFLAQMDDYSPLIPDVLLDYYLSLSGFKCVDPRLKKLLGLTAQKFISDVAQDAYQYSKIRTGSSNASSTTFGAQNFGAGGASGIGSSGRRGDRGKTVLTVDDLSAALNEYGINLKRPDFFR</sequence>
<protein>
    <recommendedName>
        <fullName>SAGA complex/transcription factor TFIID complex subunit Taf10</fullName>
    </recommendedName>
    <alternativeName>
        <fullName>TBP-associated factor 10</fullName>
    </alternativeName>
    <alternativeName>
        <fullName>Transcription initiation factor TFIID subunit 10</fullName>
    </alternativeName>
</protein>
<organism>
    <name type="scientific">Schizosaccharomyces pombe (strain 972 / ATCC 24843)</name>
    <name type="common">Fission yeast</name>
    <dbReference type="NCBI Taxonomy" id="284812"/>
    <lineage>
        <taxon>Eukaryota</taxon>
        <taxon>Fungi</taxon>
        <taxon>Dikarya</taxon>
        <taxon>Ascomycota</taxon>
        <taxon>Taphrinomycotina</taxon>
        <taxon>Schizosaccharomycetes</taxon>
        <taxon>Schizosaccharomycetales</taxon>
        <taxon>Schizosaccharomycetaceae</taxon>
        <taxon>Schizosaccharomyces</taxon>
    </lineage>
</organism>
<accession>O60171</accession>
<gene>
    <name evidence="8" type="primary">taf10</name>
    <name type="ORF">SPBC21H7.02</name>
</gene>
<proteinExistence type="evidence at protein level"/>
<comment type="function">
    <text evidence="1">Functions as a component of both the DNA-binding general transcription initiation factor complex TFIID and the transcription coactivator SAGA complex. Binding of TFIID to a promoter (with or without TATA element) is the initial step in pre-initiation complex (PIC) formation. TFIID plays a key role in the regulation of gene expression by RNA polymerase II through different activities such as transcription activator interaction, core promoter recognition and selectivity, TFIIA and TFIIB interaction, chromatin modification (histone acetylation by TAF1), facilitation of DNA opening and initiation of transcription. SAGA acts as a general cofactor required for essentially all RNA polymerase II transcription. At the promoters, SAGA is required for transcription pre-initiation complex (PIC) recruitment. It influences RNA polymerase II transcriptional activity through different activities such as TBP interaction (via core/TAF module) and promoter selectivity, interaction with transcription activators (via Tra1/SPT module), and chromatin modification through histone acetylation (via HAT module) and deubiquitination (via DUB module). SAGA preferentially acetylates histones H3 (to form H3K9ac, H3K14ac, H3K18ac and H3K23ac) and H2B and deubiquitinates histone H2B. SAGA interacts with DNA via upstream activating sequences (UASs).</text>
</comment>
<comment type="subunit">
    <text evidence="1 5 6">Component of the 1.8 MDa SAGA (Spt-Ada-Gcn5 acetyltransferase) complex, which is composed of 19 subunits tra1, spt7, taf5, ngg1/ada3, sgf73, spt20, spt8, taf12, taf6, hfi1/ada1, ubp8, gcn5, ada2, spt3, sgf29, taf10, taf9, sgf11 and sus1 (PubMed:19056896). The SAGA complex is composed of 4 modules, namely the HAT (histone acetyltransferase) module (gcn5, ada2, ngg1/ada3 and sgf29), the DUB (deubiquitinating) module (ubp8, sgf11, sgf73 and sus1), the core or TAF (TBP-associated factor) module (taf5, taf6, taf9, taf10 and taf12), and the Tra1 or SPT (Suppressor of Ty) module (tra1, hfi1/ada1, spt3, spt7, spt8 and spt20). The Tra1/SPT module binds activators, the core module recruits TBP (TATA-binding protein), the HAT module contains the histone H3 acetyltransferase gcn5, and the DUB module comprises the histone H2B deubiquitinase ubp8 (By similarity). Component of the 1.2 MDa TFIID complex, which is composed of TATA-binding protein (TBP) and the 14 TBP-associated factors (TAFs) (PubMed:19913479). It comprises 1 copy of each taf1, taf2, taf3, taf7, taf8, taf11, taf13, 2 copies of each taf4, taf5, taf6, taf9, taf10, taf12, and 3 copies of taf14. In TFIID, taf10 heterodimerizes with taf3 and taf8 (By similarity).</text>
</comment>
<comment type="subcellular location">
    <subcellularLocation>
        <location evidence="4">Nucleus</location>
    </subcellularLocation>
</comment>
<comment type="domain">
    <text evidence="1">The histone-fold domain (HFD) mediates heterodimerization with TFIID-specific components TAF47 and TAF65 as well as SAGA-specific component SPT7.</text>
</comment>
<comment type="similarity">
    <text evidence="2">Belongs to the TAF10 family.</text>
</comment>
<name>TAF10_SCHPO</name>